<feature type="chain" id="PRO_0000118998" description="Structural maintenance of chromosomes protein 2">
    <location>
        <begin position="1"/>
        <end position="1203"/>
    </location>
</feature>
<feature type="domain" description="SMC hinge">
    <location>
        <begin position="522"/>
        <end position="640"/>
    </location>
</feature>
<feature type="region of interest" description="Disordered" evidence="3">
    <location>
        <begin position="1174"/>
        <end position="1203"/>
    </location>
</feature>
<feature type="coiled-coil region" evidence="2">
    <location>
        <begin position="172"/>
        <end position="513"/>
    </location>
</feature>
<feature type="coiled-coil region" evidence="2">
    <location>
        <begin position="670"/>
        <end position="1032"/>
    </location>
</feature>
<feature type="compositionally biased region" description="Low complexity" evidence="3">
    <location>
        <begin position="1174"/>
        <end position="1185"/>
    </location>
</feature>
<feature type="compositionally biased region" description="Basic and acidic residues" evidence="3">
    <location>
        <begin position="1186"/>
        <end position="1203"/>
    </location>
</feature>
<feature type="binding site" evidence="2">
    <location>
        <begin position="32"/>
        <end position="39"/>
    </location>
    <ligand>
        <name>ATP</name>
        <dbReference type="ChEBI" id="CHEBI:30616"/>
    </ligand>
</feature>
<gene>
    <name type="primary">smc2</name>
    <name type="synonym">cape</name>
    <name type="synonym">smc2l1</name>
</gene>
<keyword id="KW-0067">ATP-binding</keyword>
<keyword id="KW-0131">Cell cycle</keyword>
<keyword id="KW-0132">Cell division</keyword>
<keyword id="KW-0158">Chromosome</keyword>
<keyword id="KW-0175">Coiled coil</keyword>
<keyword id="KW-0963">Cytoplasm</keyword>
<keyword id="KW-0226">DNA condensation</keyword>
<keyword id="KW-0498">Mitosis</keyword>
<keyword id="KW-0547">Nucleotide-binding</keyword>
<keyword id="KW-0539">Nucleus</keyword>
<keyword id="KW-1185">Reference proteome</keyword>
<protein>
    <recommendedName>
        <fullName>Structural maintenance of chromosomes protein 2</fullName>
        <shortName>SMC protein 2</shortName>
        <shortName>SMC-2</shortName>
    </recommendedName>
    <alternativeName>
        <fullName>Chromosome assembly protein XCAP-E</fullName>
    </alternativeName>
    <alternativeName>
        <fullName>Chromosome-associated protein E</fullName>
    </alternativeName>
</protein>
<organism>
    <name type="scientific">Xenopus laevis</name>
    <name type="common">African clawed frog</name>
    <dbReference type="NCBI Taxonomy" id="8355"/>
    <lineage>
        <taxon>Eukaryota</taxon>
        <taxon>Metazoa</taxon>
        <taxon>Chordata</taxon>
        <taxon>Craniata</taxon>
        <taxon>Vertebrata</taxon>
        <taxon>Euteleostomi</taxon>
        <taxon>Amphibia</taxon>
        <taxon>Batrachia</taxon>
        <taxon>Anura</taxon>
        <taxon>Pipoidea</taxon>
        <taxon>Pipidae</taxon>
        <taxon>Xenopodinae</taxon>
        <taxon>Xenopus</taxon>
        <taxon>Xenopus</taxon>
    </lineage>
</organism>
<evidence type="ECO:0000250" key="1"/>
<evidence type="ECO:0000255" key="2"/>
<evidence type="ECO:0000256" key="3">
    <source>
        <dbReference type="SAM" id="MobiDB-lite"/>
    </source>
</evidence>
<evidence type="ECO:0000269" key="4">
    <source>
    </source>
</evidence>
<evidence type="ECO:0000269" key="5">
    <source>
    </source>
</evidence>
<evidence type="ECO:0000269" key="6">
    <source>
    </source>
</evidence>
<evidence type="ECO:0000305" key="7"/>
<comment type="function">
    <text evidence="4 6">Central component of the condensin complex, a complex required for conversion of interphase chromatin into mitotic-like condense chromosomes. The condensin complex probably introduces positive supercoils into relaxed DNA in the presence of type I topoisomerases and converts nicked DNA into positive knotted forms in the presence of type II topoisomerases.</text>
</comment>
<comment type="subunit">
    <text evidence="5">Forms a heterodimer with XCAP-C/SMC4. Component of the condensin complex, which contains the XCAP-E/SMC2 and XCAP-C/SMC4 heterodimer, and three non SMC subunits that probably regulate the complex: XCAP-H/BRRN1, XCAP-D2/CNAP1 and XCAP-G/CAPG.</text>
</comment>
<comment type="interaction">
    <interactant intactId="EBI-3511283">
        <id>P50533</id>
    </interactant>
    <interactant intactId="EBI-15815271">
        <id>Q9YHY6</id>
        <label>ncapd2</label>
    </interactant>
    <organismsDiffer>false</organismsDiffer>
    <experiments>4</experiments>
</comment>
<comment type="interaction">
    <interactant intactId="EBI-3511283">
        <id>P50533</id>
    </interactant>
    <interactant intactId="EBI-15815299">
        <id>Q6GN08</id>
        <label>ncapd3.L</label>
    </interactant>
    <organismsDiffer>false</organismsDiffer>
    <experiments>3</experiments>
</comment>
<comment type="subcellular location">
    <subcellularLocation>
        <location evidence="1">Nucleus</location>
    </subcellularLocation>
    <subcellularLocation>
        <location evidence="1">Cytoplasm</location>
    </subcellularLocation>
    <subcellularLocation>
        <location evidence="1">Chromosome</location>
    </subcellularLocation>
    <text evidence="1">In interphase cells, the majority of the condensin complex is found in the cytoplasm, while a minority of the complex is associated with chromatin. A subpopulation of the complex however remains associated with chromosome foci in interphase cells. During mitosis, most of the condensin complex is associated with the chromatin. At the onset of prophase, the regulatory subunits of the complex are phosphorylated by CDC2, leading to condensin's association with chromosome arms and to chromosome condensation. Dissociation from chromosomes is observed in late telophase (By similarity).</text>
</comment>
<comment type="domain">
    <text evidence="1">The SMC hinge domain, which separates the large intramolecular coiled coil regions, allows the heterodimerization with XCAP-C, forming a V-shaped heterodimer.</text>
</comment>
<comment type="similarity">
    <text evidence="7">Belongs to the SMC family. SMC2 subfamily.</text>
</comment>
<dbReference type="EMBL" id="U13674">
    <property type="protein sequence ID" value="AAA64680.1"/>
    <property type="molecule type" value="mRNA"/>
</dbReference>
<dbReference type="PIR" id="B55094">
    <property type="entry name" value="B55094"/>
</dbReference>
<dbReference type="RefSeq" id="NP_001081372.1">
    <property type="nucleotide sequence ID" value="NM_001087903.1"/>
</dbReference>
<dbReference type="SMR" id="P50533"/>
<dbReference type="BioGRID" id="99139">
    <property type="interactions" value="5"/>
</dbReference>
<dbReference type="DIP" id="DIP-48586N"/>
<dbReference type="IntAct" id="P50533">
    <property type="interactions" value="5"/>
</dbReference>
<dbReference type="GeneID" id="397800"/>
<dbReference type="KEGG" id="xla:397800"/>
<dbReference type="AGR" id="Xenbase:XB-GENE-5826203"/>
<dbReference type="CTD" id="397800"/>
<dbReference type="Xenbase" id="XB-GENE-5826203">
    <property type="gene designation" value="smc2.L"/>
</dbReference>
<dbReference type="OrthoDB" id="10255539at2759"/>
<dbReference type="Proteomes" id="UP000186698">
    <property type="component" value="Chromosome 1L"/>
</dbReference>
<dbReference type="Bgee" id="397800">
    <property type="expression patterns" value="Expressed in neurula embryo and 18 other cell types or tissues"/>
</dbReference>
<dbReference type="GO" id="GO:0005694">
    <property type="term" value="C:chromosome"/>
    <property type="evidence" value="ECO:0007669"/>
    <property type="project" value="UniProtKB-SubCell"/>
</dbReference>
<dbReference type="GO" id="GO:0005829">
    <property type="term" value="C:cytosol"/>
    <property type="evidence" value="ECO:0000304"/>
    <property type="project" value="Reactome"/>
</dbReference>
<dbReference type="GO" id="GO:0005634">
    <property type="term" value="C:nucleus"/>
    <property type="evidence" value="ECO:0007669"/>
    <property type="project" value="UniProtKB-SubCell"/>
</dbReference>
<dbReference type="GO" id="GO:0005524">
    <property type="term" value="F:ATP binding"/>
    <property type="evidence" value="ECO:0007669"/>
    <property type="project" value="UniProtKB-KW"/>
</dbReference>
<dbReference type="GO" id="GO:0016887">
    <property type="term" value="F:ATP hydrolysis activity"/>
    <property type="evidence" value="ECO:0007669"/>
    <property type="project" value="InterPro"/>
</dbReference>
<dbReference type="GO" id="GO:0051301">
    <property type="term" value="P:cell division"/>
    <property type="evidence" value="ECO:0007669"/>
    <property type="project" value="UniProtKB-KW"/>
</dbReference>
<dbReference type="GO" id="GO:0030261">
    <property type="term" value="P:chromosome condensation"/>
    <property type="evidence" value="ECO:0007669"/>
    <property type="project" value="UniProtKB-KW"/>
</dbReference>
<dbReference type="CDD" id="cd03273">
    <property type="entry name" value="ABC_SMC2_euk"/>
    <property type="match status" value="1"/>
</dbReference>
<dbReference type="FunFam" id="3.30.70.1620:FF:000005">
    <property type="entry name" value="Structural maintenance of chromosomes 2"/>
    <property type="match status" value="1"/>
</dbReference>
<dbReference type="FunFam" id="3.40.50.300:FF:000278">
    <property type="entry name" value="Structural maintenance of chromosomes 2"/>
    <property type="match status" value="1"/>
</dbReference>
<dbReference type="FunFam" id="3.40.50.300:FF:000385">
    <property type="entry name" value="Structural maintenance of chromosomes 2"/>
    <property type="match status" value="1"/>
</dbReference>
<dbReference type="FunFam" id="1.20.1060.20:FF:000016">
    <property type="entry name" value="Structural maintenance of chromosomes protein 2"/>
    <property type="match status" value="1"/>
</dbReference>
<dbReference type="Gene3D" id="1.20.1060.20">
    <property type="match status" value="1"/>
</dbReference>
<dbReference type="Gene3D" id="3.30.70.1620">
    <property type="match status" value="1"/>
</dbReference>
<dbReference type="Gene3D" id="3.40.50.300">
    <property type="entry name" value="P-loop containing nucleotide triphosphate hydrolases"/>
    <property type="match status" value="2"/>
</dbReference>
<dbReference type="InterPro" id="IPR027417">
    <property type="entry name" value="P-loop_NTPase"/>
</dbReference>
<dbReference type="InterPro" id="IPR003395">
    <property type="entry name" value="RecF/RecN/SMC_N"/>
</dbReference>
<dbReference type="InterPro" id="IPR024704">
    <property type="entry name" value="SMC"/>
</dbReference>
<dbReference type="InterPro" id="IPR027120">
    <property type="entry name" value="Smc2_ABC"/>
</dbReference>
<dbReference type="InterPro" id="IPR010935">
    <property type="entry name" value="SMC_hinge"/>
</dbReference>
<dbReference type="InterPro" id="IPR036277">
    <property type="entry name" value="SMC_hinge_sf"/>
</dbReference>
<dbReference type="PANTHER" id="PTHR43977">
    <property type="entry name" value="STRUCTURAL MAINTENANCE OF CHROMOSOMES PROTEIN 3"/>
    <property type="match status" value="1"/>
</dbReference>
<dbReference type="Pfam" id="PF06470">
    <property type="entry name" value="SMC_hinge"/>
    <property type="match status" value="1"/>
</dbReference>
<dbReference type="Pfam" id="PF02463">
    <property type="entry name" value="SMC_N"/>
    <property type="match status" value="1"/>
</dbReference>
<dbReference type="PIRSF" id="PIRSF005719">
    <property type="entry name" value="SMC"/>
    <property type="match status" value="1"/>
</dbReference>
<dbReference type="SMART" id="SM00968">
    <property type="entry name" value="SMC_hinge"/>
    <property type="match status" value="1"/>
</dbReference>
<dbReference type="SUPFAM" id="SSF52540">
    <property type="entry name" value="P-loop containing nucleoside triphosphate hydrolases"/>
    <property type="match status" value="1"/>
</dbReference>
<dbReference type="SUPFAM" id="SSF75553">
    <property type="entry name" value="Smc hinge domain"/>
    <property type="match status" value="1"/>
</dbReference>
<proteinExistence type="evidence at protein level"/>
<reference key="1">
    <citation type="journal article" date="1994" name="Cell">
        <title>A heterodimeric coiled-coil protein required for mitotic chromosome condensation in vitro.</title>
        <authorList>
            <person name="Hirano T."/>
            <person name="Mitchison T.J."/>
        </authorList>
    </citation>
    <scope>NUCLEOTIDE SEQUENCE [MRNA]</scope>
    <scope>INTERACTION WITH XCAP-C</scope>
</reference>
<reference key="2">
    <citation type="journal article" date="1997" name="Cell">
        <title>Condensins, chromosome condensation protein complexes containing XCAP-C, XCAP-E and a Xenopus homolog of the Drosophila Barren protein.</title>
        <authorList>
            <person name="Hirano T."/>
            <person name="Kobayashi R."/>
            <person name="Hirano M."/>
        </authorList>
    </citation>
    <scope>IDENTIFICATION IN A CONDENSIN COMPLEX WITH XCAP-C; XCAP-H; XCAP-D2 AND XCAP-G</scope>
</reference>
<reference key="3">
    <citation type="journal article" date="1998" name="Science">
        <title>Phosphorylation and activation of 13S condensin by Cdc2 in vitro.</title>
        <authorList>
            <person name="Kimura K."/>
            <person name="Hirano M."/>
            <person name="Kobayashi R."/>
            <person name="Hirano T."/>
        </authorList>
    </citation>
    <scope>FUNCTION OF THE CONDENSIN COMPLEX</scope>
</reference>
<reference key="4">
    <citation type="journal article" date="1999" name="Cell">
        <title>13S condensin actively reconfigures DNA by introducing global positive writhe: implications for chromosome condensation.</title>
        <authorList>
            <person name="Kimura K."/>
            <person name="Rybenkov V.V."/>
            <person name="Crisona N.J."/>
            <person name="Hirano T."/>
            <person name="Cozzarelli N.R."/>
        </authorList>
    </citation>
    <scope>FUNCTION OF THE CONDENSIN COMPLEX</scope>
</reference>
<sequence length="1203" mass="136342">MHVKSIIIDGFKSYAQRTEINGFDPLFNAITGLNGSGKSNILDSICFLLGISNLTQVRASNLQDLVYKNGQAGITKATVSITFDNYDKKQSPLGFEAHDEITVTRQVVIGGRNKYLINGVNANNTRVQDLFCSVGLNVNNPHFLIMQGRITKVLNMKPPEILAMIEEAAGTRMYECKKIAAQKTIEKKEAKLKEIQTILEEEITPTIHKLKEERSSYLEYQKIMREIEHLSRLYVAYQFVCAEETKVRSAEELKEMQDSILKLQDTMAENERKVKELGKEIAELEKMRDQEVGGALRSLEEALSEAQRADTKVQSALDLKKQNMKAEREKKRKELVKSMEEDAKVLTAKEKEVKKITDGLSSLQEASQKDVEAFTSAQQHFNAVSAGLSSNEDGEEATLAGQMMACKNETSKAETEAKQAQMKLKHAQQELKTKQAEVKKMDGGYKKDNEAFEAVKKSKEKLEVEMKKLNYEDGREEQLLEKRRGLSRDVNRLREAYESLMARFPNLQFEYKDPEKNWDSDRVKGLVASLISIKDVSTATALEVVAGGRLYNVVVDTEVTGKKLLEKGELKRRFTIIPLNKISARCLGKDTVNVAKNLVGADNVNLALSLVGYESELQKAMEYVFGTTLVCDTMDNAKKVTFDKRIMTKTVTLGGDTFDPQGTLSGGARSQNASVLVRLQELKDVQDELKAKETELQEVEKELMTLKNTVERYRQLKQQWEMKSEEAELLQTKLQQSSYHKQQEELDSLKQTIEESEETLKNTKEVQKKAEEKFKVLEHKMKNAEAERERELKEAQQKLDTAKKKADASNKKMKEKQQEVDALVLELEELKREQTTYKQQIETVDEAMKAYQEQADSMASEVSKNKEAVKKAQDELAKQKEIIMGHDKEIKTKSSEAGKLRENNNDLQLKIKELEHNISKHKKDSADAAAKVAKMLNDYEWIASEKHLFGQANTAYDFKTNNPKEAGQRLHKLQEKKEKLGRNVNMRAMNMLTQAEERYNDLMKRKRIVENDKSKILTTIEELDQKKNEALNIAWQKVNKDFGSIFSTLLPGANAMLAPPEGQSVLDGLEFKVALGNTWKENLTELSGGQRSLVALSLILAMLLFKPAPIYILDEVDAALDLSHTQNIGQMLRTHFRHSQFIVVSLKDGMFNNANVLFKTKFVDGVSTVARFAQNQNGGSSAGQQRSDKSKTKERRNRMEVDK</sequence>
<accession>P50533</accession>
<name>SMC2_XENLA</name>